<feature type="peptide" id="PRO_0000010174" description="Caerin-1.4">
    <location>
        <begin position="1"/>
        <end position="25"/>
    </location>
</feature>
<feature type="peptide" id="PRO_0000010175" description="Caerin-1.4.1">
    <location>
        <begin position="1"/>
        <end position="10"/>
    </location>
</feature>
<feature type="modified residue" description="Leucine amide" evidence="2">
    <location>
        <position position="25"/>
    </location>
</feature>
<evidence type="ECO:0000250" key="1"/>
<evidence type="ECO:0000269" key="2">
    <source ref="1"/>
</evidence>
<evidence type="ECO:0000305" key="3"/>
<sequence>GLLSSLSSVAKHVLPHVVPVIAEHL</sequence>
<reference key="1">
    <citation type="journal article" date="1993" name="J. Chem. Res.">
        <title>Peptides from Australian frogs. The structures of the caerins from Litoria caerula.</title>
        <authorList>
            <person name="Stone D.J.M."/>
            <person name="Waugh R.J."/>
            <person name="Bowie J.H."/>
            <person name="Wallace J.C."/>
            <person name="Tyler M.J."/>
        </authorList>
    </citation>
    <scope>PROTEIN SEQUENCE</scope>
    <scope>AMIDATION AT LEU-25</scope>
    <scope>MASS SPECTROMETRY</scope>
    <source>
        <tissue>Parotoid gland</tissue>
    </source>
</reference>
<protein>
    <recommendedName>
        <fullName>Caerin-1.4</fullName>
    </recommendedName>
    <component>
        <recommendedName>
            <fullName>Caerin-1.4.1</fullName>
        </recommendedName>
    </component>
</protein>
<organism>
    <name type="scientific">Ranoidea caerulea</name>
    <name type="common">Green tree frog</name>
    <name type="synonym">Litoria caerulea</name>
    <dbReference type="NCBI Taxonomy" id="30344"/>
    <lineage>
        <taxon>Eukaryota</taxon>
        <taxon>Metazoa</taxon>
        <taxon>Chordata</taxon>
        <taxon>Craniata</taxon>
        <taxon>Vertebrata</taxon>
        <taxon>Euteleostomi</taxon>
        <taxon>Amphibia</taxon>
        <taxon>Batrachia</taxon>
        <taxon>Anura</taxon>
        <taxon>Neobatrachia</taxon>
        <taxon>Hyloidea</taxon>
        <taxon>Hylidae</taxon>
        <taxon>Pelodryadinae</taxon>
        <taxon>Ranoidea</taxon>
    </lineage>
</organism>
<proteinExistence type="evidence at protein level"/>
<comment type="function">
    <text>Antibacterial peptide, that adopts an alpha helical conformation which can disrupt bacterial membranes. Each caerin displays a different antimicrobial specificity.</text>
</comment>
<comment type="subcellular location">
    <subcellularLocation>
        <location>Secreted</location>
    </subcellularLocation>
</comment>
<comment type="tissue specificity">
    <text>Expressed by the skin parotoid and/or rostral glands.</text>
</comment>
<comment type="domain">
    <text evidence="1">Contains two amphipathic alpha helix regions separated by a region of less-defined helicity and greater flexibility.</text>
</comment>
<comment type="mass spectrometry">
    <molecule>Caerin-1.4</molecule>
</comment>
<comment type="similarity">
    <text evidence="3">Belongs to the frog skin active peptide (FSAP) family. Caerin subfamily.</text>
</comment>
<accession>P62545</accession>
<accession>P56229</accession>
<keyword id="KW-0027">Amidation</keyword>
<keyword id="KW-0878">Amphibian defense peptide</keyword>
<keyword id="KW-0044">Antibiotic</keyword>
<keyword id="KW-0929">Antimicrobial</keyword>
<keyword id="KW-0903">Direct protein sequencing</keyword>
<keyword id="KW-0964">Secreted</keyword>
<dbReference type="SMR" id="P62545"/>
<dbReference type="GO" id="GO:0005576">
    <property type="term" value="C:extracellular region"/>
    <property type="evidence" value="ECO:0007669"/>
    <property type="project" value="UniProtKB-SubCell"/>
</dbReference>
<dbReference type="GO" id="GO:0042742">
    <property type="term" value="P:defense response to bacterium"/>
    <property type="evidence" value="ECO:0007669"/>
    <property type="project" value="UniProtKB-KW"/>
</dbReference>
<dbReference type="InterPro" id="IPR010000">
    <property type="entry name" value="Caerin_1"/>
</dbReference>
<dbReference type="Pfam" id="PF07440">
    <property type="entry name" value="Caerin_1"/>
    <property type="match status" value="1"/>
</dbReference>
<name>CR14_RANCA</name>